<evidence type="ECO:0000255" key="1">
    <source>
        <dbReference type="PROSITE-ProRule" id="PRU00723"/>
    </source>
</evidence>
<evidence type="ECO:0000269" key="2">
    <source>
    </source>
</evidence>
<evidence type="ECO:0000269" key="3">
    <source>
    </source>
</evidence>
<evidence type="ECO:0000269" key="4">
    <source>
    </source>
</evidence>
<evidence type="ECO:0000303" key="5">
    <source>
    </source>
</evidence>
<evidence type="ECO:0000303" key="6">
    <source>
    </source>
</evidence>
<evidence type="ECO:0000303" key="7">
    <source>
    </source>
</evidence>
<evidence type="ECO:0000303" key="8">
    <source ref="3"/>
</evidence>
<evidence type="ECO:0000305" key="9"/>
<comment type="function">
    <text evidence="3 4">Mediates pre-mRNA alternative splicing regulation. Acts either as activator or repressor of splicing on specific pre-mRNA targets. Inhibits cardiac troponin-T (TNNT2) pre-mRNA exon inclusion but induces insulin receptor (IR) pre-mRNA exon inclusion in muscle. Antagonizes the alternative splicing activity pattern of CELF proteins. May play a role in myotonic dystrophy pathophysiology (DM). Could inhibit terminal muscle differentiation, acting at approximately the time of myogenin induction.</text>
</comment>
<comment type="interaction">
    <interactant intactId="EBI-6661142">
        <id>Q9NUK0</id>
    </interactant>
    <interactant intactId="EBI-7875264">
        <id>O75553</id>
        <label>DAB1</label>
    </interactant>
    <organismsDiffer>false</organismsDiffer>
    <experiments>3</experiments>
</comment>
<comment type="interaction">
    <interactant intactId="EBI-12049233">
        <id>Q9NUK0-3</id>
    </interactant>
    <interactant intactId="EBI-12754095">
        <id>P86480</id>
        <label>PRR20D</label>
    </interactant>
    <organismsDiffer>false</organismsDiffer>
    <experiments>3</experiments>
</comment>
<comment type="subcellular location">
    <subcellularLocation>
        <location evidence="2">Nucleus</location>
    </subcellularLocation>
    <subcellularLocation>
        <location evidence="2">Cytoplasm</location>
    </subcellularLocation>
    <text>Greater concentration in the nucleus. In both DM1 and DM2 patients, colocalizes with nuclear foci of retained expanded-repeat transcripts.</text>
</comment>
<comment type="alternative products">
    <event type="alternative splicing"/>
    <isoform>
        <id>Q9NUK0-1</id>
        <name>1</name>
        <name>HCHCR-G</name>
        <name>G</name>
        <sequence type="displayed"/>
    </isoform>
    <isoform>
        <id>Q9NUK0-2</id>
        <name>2</name>
        <name>HCHCR-R</name>
        <name>R</name>
        <sequence type="described" ref="VSP_006433 VSP_006434"/>
    </isoform>
    <isoform>
        <id>Q9NUK0-3</id>
        <name>3</name>
        <sequence type="described" ref="VSP_006431 VSP_006432"/>
    </isoform>
    <isoform>
        <id>Q9NUK0-4</id>
        <name>4</name>
        <sequence type="described" ref="VSP_006431 VSP_006432 VSP_015935"/>
    </isoform>
    <isoform>
        <id>Q9NUK0-5</id>
        <name>5</name>
        <sequence type="described" ref="VSP_044309"/>
    </isoform>
</comment>
<comment type="tissue specificity">
    <text evidence="2">Highly expressed in the placenta.</text>
</comment>
<comment type="similarity">
    <text evidence="9">Belongs to the muscleblind family.</text>
</comment>
<feature type="chain" id="PRO_0000089180" description="Muscleblind-like protein 3">
    <location>
        <begin position="1"/>
        <end position="354"/>
    </location>
</feature>
<feature type="zinc finger region" description="C3H1-type 1" evidence="1">
    <location>
        <begin position="14"/>
        <end position="42"/>
    </location>
</feature>
<feature type="zinc finger region" description="C3H1-type 2" evidence="1">
    <location>
        <begin position="48"/>
        <end position="74"/>
    </location>
</feature>
<feature type="zinc finger region" description="C3H1-type 3" evidence="1">
    <location>
        <begin position="174"/>
        <end position="202"/>
    </location>
</feature>
<feature type="zinc finger region" description="C3H1-type 4" evidence="1">
    <location>
        <begin position="210"/>
        <end position="236"/>
    </location>
</feature>
<feature type="splice variant" id="VSP_044309" description="In isoform 5." evidence="6 7">
    <location>
        <begin position="1"/>
        <end position="96"/>
    </location>
</feature>
<feature type="splice variant" id="VSP_006431" description="In isoform 3 and isoform 4." evidence="6 8">
    <location>
        <begin position="1"/>
        <end position="50"/>
    </location>
</feature>
<feature type="splice variant" id="VSP_006432" description="In isoform 3 and isoform 4." evidence="6 8">
    <original>VVACFDS</original>
    <variation>MERASKN</variation>
    <location>
        <begin position="51"/>
        <end position="57"/>
    </location>
</feature>
<feature type="splice variant" id="VSP_006433" description="In isoform 2." evidence="5">
    <location>
        <begin position="258"/>
        <end position="292"/>
    </location>
</feature>
<feature type="splice variant" id="VSP_015935" description="In isoform 4." evidence="8">
    <location>
        <begin position="308"/>
        <end position="319"/>
    </location>
</feature>
<feature type="splice variant" id="VSP_006434" description="In isoform 2." evidence="5">
    <original>LKF</original>
    <variation>IPQLSIDELNSSMFVSQM</variation>
    <location>
        <begin position="352"/>
        <end position="354"/>
    </location>
</feature>
<feature type="sequence conflict" description="In Ref. 3; AAQ75759." evidence="9" ref="3">
    <original>S</original>
    <variation>P</variation>
    <location>
        <position position="113"/>
    </location>
</feature>
<feature type="sequence conflict" description="In Ref. 3; AAQ75759." evidence="9" ref="3">
    <original>N</original>
    <variation>I</variation>
    <location>
        <position position="187"/>
    </location>
</feature>
<name>MBNL3_HUMAN</name>
<gene>
    <name type="primary">MBNL3</name>
    <name type="synonym">CHCR</name>
    <name type="synonym">MBLX39</name>
    <name type="synonym">MBXL</name>
</gene>
<proteinExistence type="evidence at protein level"/>
<reference key="1">
    <citation type="journal article" date="2002" name="Dev. Biol.">
        <title>Inhibition of muscle differentiation by the novel muscleblind-related protein CHCR.</title>
        <authorList>
            <person name="Squillace R.M."/>
            <person name="Chenault D.M."/>
            <person name="Wang E.H."/>
        </authorList>
    </citation>
    <scope>NUCLEOTIDE SEQUENCE [MRNA] (ISOFORMS 1 AND 2)</scope>
    <scope>FUNCTION</scope>
    <source>
        <tissue>Embryonic kidney</tissue>
    </source>
</reference>
<reference key="2">
    <citation type="submission" date="2002-03" db="EMBL/GenBank/DDBJ databases">
        <title>MBLX39 sequence.</title>
        <authorList>
            <person name="Urbinati C.R."/>
            <person name="Swanson M.S."/>
        </authorList>
    </citation>
    <scope>NUCLEOTIDE SEQUENCE [MRNA] (ISOFORM 1)</scope>
</reference>
<reference key="3">
    <citation type="submission" date="2003-08" db="EMBL/GenBank/DDBJ databases">
        <authorList>
            <person name="Li H."/>
            <person name="Yu R."/>
            <person name="Zheng G."/>
            <person name="Ke R."/>
            <person name="Zhou G."/>
            <person name="Shen C."/>
            <person name="Li M."/>
            <person name="Xiao W."/>
            <person name="Lin L."/>
            <person name="Yang S."/>
        </authorList>
    </citation>
    <scope>NUCLEOTIDE SEQUENCE [LARGE SCALE MRNA] (ISOFORM 4)</scope>
</reference>
<reference key="4">
    <citation type="journal article" date="2004" name="Nat. Genet.">
        <title>Complete sequencing and characterization of 21,243 full-length human cDNAs.</title>
        <authorList>
            <person name="Ota T."/>
            <person name="Suzuki Y."/>
            <person name="Nishikawa T."/>
            <person name="Otsuki T."/>
            <person name="Sugiyama T."/>
            <person name="Irie R."/>
            <person name="Wakamatsu A."/>
            <person name="Hayashi K."/>
            <person name="Sato H."/>
            <person name="Nagai K."/>
            <person name="Kimura K."/>
            <person name="Makita H."/>
            <person name="Sekine M."/>
            <person name="Obayashi M."/>
            <person name="Nishi T."/>
            <person name="Shibahara T."/>
            <person name="Tanaka T."/>
            <person name="Ishii S."/>
            <person name="Yamamoto J."/>
            <person name="Saito K."/>
            <person name="Kawai Y."/>
            <person name="Isono Y."/>
            <person name="Nakamura Y."/>
            <person name="Nagahari K."/>
            <person name="Murakami K."/>
            <person name="Yasuda T."/>
            <person name="Iwayanagi T."/>
            <person name="Wagatsuma M."/>
            <person name="Shiratori A."/>
            <person name="Sudo H."/>
            <person name="Hosoiri T."/>
            <person name="Kaku Y."/>
            <person name="Kodaira H."/>
            <person name="Kondo H."/>
            <person name="Sugawara M."/>
            <person name="Takahashi M."/>
            <person name="Kanda K."/>
            <person name="Yokoi T."/>
            <person name="Furuya T."/>
            <person name="Kikkawa E."/>
            <person name="Omura Y."/>
            <person name="Abe K."/>
            <person name="Kamihara K."/>
            <person name="Katsuta N."/>
            <person name="Sato K."/>
            <person name="Tanikawa M."/>
            <person name="Yamazaki M."/>
            <person name="Ninomiya K."/>
            <person name="Ishibashi T."/>
            <person name="Yamashita H."/>
            <person name="Murakawa K."/>
            <person name="Fujimori K."/>
            <person name="Tanai H."/>
            <person name="Kimata M."/>
            <person name="Watanabe M."/>
            <person name="Hiraoka S."/>
            <person name="Chiba Y."/>
            <person name="Ishida S."/>
            <person name="Ono Y."/>
            <person name="Takiguchi S."/>
            <person name="Watanabe S."/>
            <person name="Yosida M."/>
            <person name="Hotuta T."/>
            <person name="Kusano J."/>
            <person name="Kanehori K."/>
            <person name="Takahashi-Fujii A."/>
            <person name="Hara H."/>
            <person name="Tanase T.-O."/>
            <person name="Nomura Y."/>
            <person name="Togiya S."/>
            <person name="Komai F."/>
            <person name="Hara R."/>
            <person name="Takeuchi K."/>
            <person name="Arita M."/>
            <person name="Imose N."/>
            <person name="Musashino K."/>
            <person name="Yuuki H."/>
            <person name="Oshima A."/>
            <person name="Sasaki N."/>
            <person name="Aotsuka S."/>
            <person name="Yoshikawa Y."/>
            <person name="Matsunawa H."/>
            <person name="Ichihara T."/>
            <person name="Shiohata N."/>
            <person name="Sano S."/>
            <person name="Moriya S."/>
            <person name="Momiyama H."/>
            <person name="Satoh N."/>
            <person name="Takami S."/>
            <person name="Terashima Y."/>
            <person name="Suzuki O."/>
            <person name="Nakagawa S."/>
            <person name="Senoh A."/>
            <person name="Mizoguchi H."/>
            <person name="Goto Y."/>
            <person name="Shimizu F."/>
            <person name="Wakebe H."/>
            <person name="Hishigaki H."/>
            <person name="Watanabe T."/>
            <person name="Sugiyama A."/>
            <person name="Takemoto M."/>
            <person name="Kawakami B."/>
            <person name="Yamazaki M."/>
            <person name="Watanabe K."/>
            <person name="Kumagai A."/>
            <person name="Itakura S."/>
            <person name="Fukuzumi Y."/>
            <person name="Fujimori Y."/>
            <person name="Komiyama M."/>
            <person name="Tashiro H."/>
            <person name="Tanigami A."/>
            <person name="Fujiwara T."/>
            <person name="Ono T."/>
            <person name="Yamada K."/>
            <person name="Fujii Y."/>
            <person name="Ozaki K."/>
            <person name="Hirao M."/>
            <person name="Ohmori Y."/>
            <person name="Kawabata A."/>
            <person name="Hikiji T."/>
            <person name="Kobatake N."/>
            <person name="Inagaki H."/>
            <person name="Ikema Y."/>
            <person name="Okamoto S."/>
            <person name="Okitani R."/>
            <person name="Kawakami T."/>
            <person name="Noguchi S."/>
            <person name="Itoh T."/>
            <person name="Shigeta K."/>
            <person name="Senba T."/>
            <person name="Matsumura K."/>
            <person name="Nakajima Y."/>
            <person name="Mizuno T."/>
            <person name="Morinaga M."/>
            <person name="Sasaki M."/>
            <person name="Togashi T."/>
            <person name="Oyama M."/>
            <person name="Hata H."/>
            <person name="Watanabe M."/>
            <person name="Komatsu T."/>
            <person name="Mizushima-Sugano J."/>
            <person name="Satoh T."/>
            <person name="Shirai Y."/>
            <person name="Takahashi Y."/>
            <person name="Nakagawa K."/>
            <person name="Okumura K."/>
            <person name="Nagase T."/>
            <person name="Nomura N."/>
            <person name="Kikuchi H."/>
            <person name="Masuho Y."/>
            <person name="Yamashita R."/>
            <person name="Nakai K."/>
            <person name="Yada T."/>
            <person name="Nakamura Y."/>
            <person name="Ohara O."/>
            <person name="Isogai T."/>
            <person name="Sugano S."/>
        </authorList>
    </citation>
    <scope>NUCLEOTIDE SEQUENCE [LARGE SCALE MRNA] (ISOFORMS 3 AND 5)</scope>
    <source>
        <tissue>Placenta</tissue>
    </source>
</reference>
<reference key="5">
    <citation type="journal article" date="2005" name="Nature">
        <title>The DNA sequence of the human X chromosome.</title>
        <authorList>
            <person name="Ross M.T."/>
            <person name="Grafham D.V."/>
            <person name="Coffey A.J."/>
            <person name="Scherer S."/>
            <person name="McLay K."/>
            <person name="Muzny D."/>
            <person name="Platzer M."/>
            <person name="Howell G.R."/>
            <person name="Burrows C."/>
            <person name="Bird C.P."/>
            <person name="Frankish A."/>
            <person name="Lovell F.L."/>
            <person name="Howe K.L."/>
            <person name="Ashurst J.L."/>
            <person name="Fulton R.S."/>
            <person name="Sudbrak R."/>
            <person name="Wen G."/>
            <person name="Jones M.C."/>
            <person name="Hurles M.E."/>
            <person name="Andrews T.D."/>
            <person name="Scott C.E."/>
            <person name="Searle S."/>
            <person name="Ramser J."/>
            <person name="Whittaker A."/>
            <person name="Deadman R."/>
            <person name="Carter N.P."/>
            <person name="Hunt S.E."/>
            <person name="Chen R."/>
            <person name="Cree A."/>
            <person name="Gunaratne P."/>
            <person name="Havlak P."/>
            <person name="Hodgson A."/>
            <person name="Metzker M.L."/>
            <person name="Richards S."/>
            <person name="Scott G."/>
            <person name="Steffen D."/>
            <person name="Sodergren E."/>
            <person name="Wheeler D.A."/>
            <person name="Worley K.C."/>
            <person name="Ainscough R."/>
            <person name="Ambrose K.D."/>
            <person name="Ansari-Lari M.A."/>
            <person name="Aradhya S."/>
            <person name="Ashwell R.I."/>
            <person name="Babbage A.K."/>
            <person name="Bagguley C.L."/>
            <person name="Ballabio A."/>
            <person name="Banerjee R."/>
            <person name="Barker G.E."/>
            <person name="Barlow K.F."/>
            <person name="Barrett I.P."/>
            <person name="Bates K.N."/>
            <person name="Beare D.M."/>
            <person name="Beasley H."/>
            <person name="Beasley O."/>
            <person name="Beck A."/>
            <person name="Bethel G."/>
            <person name="Blechschmidt K."/>
            <person name="Brady N."/>
            <person name="Bray-Allen S."/>
            <person name="Bridgeman A.M."/>
            <person name="Brown A.J."/>
            <person name="Brown M.J."/>
            <person name="Bonnin D."/>
            <person name="Bruford E.A."/>
            <person name="Buhay C."/>
            <person name="Burch P."/>
            <person name="Burford D."/>
            <person name="Burgess J."/>
            <person name="Burrill W."/>
            <person name="Burton J."/>
            <person name="Bye J.M."/>
            <person name="Carder C."/>
            <person name="Carrel L."/>
            <person name="Chako J."/>
            <person name="Chapman J.C."/>
            <person name="Chavez D."/>
            <person name="Chen E."/>
            <person name="Chen G."/>
            <person name="Chen Y."/>
            <person name="Chen Z."/>
            <person name="Chinault C."/>
            <person name="Ciccodicola A."/>
            <person name="Clark S.Y."/>
            <person name="Clarke G."/>
            <person name="Clee C.M."/>
            <person name="Clegg S."/>
            <person name="Clerc-Blankenburg K."/>
            <person name="Clifford K."/>
            <person name="Cobley V."/>
            <person name="Cole C.G."/>
            <person name="Conquer J.S."/>
            <person name="Corby N."/>
            <person name="Connor R.E."/>
            <person name="David R."/>
            <person name="Davies J."/>
            <person name="Davis C."/>
            <person name="Davis J."/>
            <person name="Delgado O."/>
            <person name="Deshazo D."/>
            <person name="Dhami P."/>
            <person name="Ding Y."/>
            <person name="Dinh H."/>
            <person name="Dodsworth S."/>
            <person name="Draper H."/>
            <person name="Dugan-Rocha S."/>
            <person name="Dunham A."/>
            <person name="Dunn M."/>
            <person name="Durbin K.J."/>
            <person name="Dutta I."/>
            <person name="Eades T."/>
            <person name="Ellwood M."/>
            <person name="Emery-Cohen A."/>
            <person name="Errington H."/>
            <person name="Evans K.L."/>
            <person name="Faulkner L."/>
            <person name="Francis F."/>
            <person name="Frankland J."/>
            <person name="Fraser A.E."/>
            <person name="Galgoczy P."/>
            <person name="Gilbert J."/>
            <person name="Gill R."/>
            <person name="Gloeckner G."/>
            <person name="Gregory S.G."/>
            <person name="Gribble S."/>
            <person name="Griffiths C."/>
            <person name="Grocock R."/>
            <person name="Gu Y."/>
            <person name="Gwilliam R."/>
            <person name="Hamilton C."/>
            <person name="Hart E.A."/>
            <person name="Hawes A."/>
            <person name="Heath P.D."/>
            <person name="Heitmann K."/>
            <person name="Hennig S."/>
            <person name="Hernandez J."/>
            <person name="Hinzmann B."/>
            <person name="Ho S."/>
            <person name="Hoffs M."/>
            <person name="Howden P.J."/>
            <person name="Huckle E.J."/>
            <person name="Hume J."/>
            <person name="Hunt P.J."/>
            <person name="Hunt A.R."/>
            <person name="Isherwood J."/>
            <person name="Jacob L."/>
            <person name="Johnson D."/>
            <person name="Jones S."/>
            <person name="de Jong P.J."/>
            <person name="Joseph S.S."/>
            <person name="Keenan S."/>
            <person name="Kelly S."/>
            <person name="Kershaw J.K."/>
            <person name="Khan Z."/>
            <person name="Kioschis P."/>
            <person name="Klages S."/>
            <person name="Knights A.J."/>
            <person name="Kosiura A."/>
            <person name="Kovar-Smith C."/>
            <person name="Laird G.K."/>
            <person name="Langford C."/>
            <person name="Lawlor S."/>
            <person name="Leversha M."/>
            <person name="Lewis L."/>
            <person name="Liu W."/>
            <person name="Lloyd C."/>
            <person name="Lloyd D.M."/>
            <person name="Loulseged H."/>
            <person name="Loveland J.E."/>
            <person name="Lovell J.D."/>
            <person name="Lozado R."/>
            <person name="Lu J."/>
            <person name="Lyne R."/>
            <person name="Ma J."/>
            <person name="Maheshwari M."/>
            <person name="Matthews L.H."/>
            <person name="McDowall J."/>
            <person name="McLaren S."/>
            <person name="McMurray A."/>
            <person name="Meidl P."/>
            <person name="Meitinger T."/>
            <person name="Milne S."/>
            <person name="Miner G."/>
            <person name="Mistry S.L."/>
            <person name="Morgan M."/>
            <person name="Morris S."/>
            <person name="Mueller I."/>
            <person name="Mullikin J.C."/>
            <person name="Nguyen N."/>
            <person name="Nordsiek G."/>
            <person name="Nyakatura G."/>
            <person name="O'dell C.N."/>
            <person name="Okwuonu G."/>
            <person name="Palmer S."/>
            <person name="Pandian R."/>
            <person name="Parker D."/>
            <person name="Parrish J."/>
            <person name="Pasternak S."/>
            <person name="Patel D."/>
            <person name="Pearce A.V."/>
            <person name="Pearson D.M."/>
            <person name="Pelan S.E."/>
            <person name="Perez L."/>
            <person name="Porter K.M."/>
            <person name="Ramsey Y."/>
            <person name="Reichwald K."/>
            <person name="Rhodes S."/>
            <person name="Ridler K.A."/>
            <person name="Schlessinger D."/>
            <person name="Schueler M.G."/>
            <person name="Sehra H.K."/>
            <person name="Shaw-Smith C."/>
            <person name="Shen H."/>
            <person name="Sheridan E.M."/>
            <person name="Shownkeen R."/>
            <person name="Skuce C.D."/>
            <person name="Smith M.L."/>
            <person name="Sotheran E.C."/>
            <person name="Steingruber H.E."/>
            <person name="Steward C.A."/>
            <person name="Storey R."/>
            <person name="Swann R.M."/>
            <person name="Swarbreck D."/>
            <person name="Tabor P.E."/>
            <person name="Taudien S."/>
            <person name="Taylor T."/>
            <person name="Teague B."/>
            <person name="Thomas K."/>
            <person name="Thorpe A."/>
            <person name="Timms K."/>
            <person name="Tracey A."/>
            <person name="Trevanion S."/>
            <person name="Tromans A.C."/>
            <person name="d'Urso M."/>
            <person name="Verduzco D."/>
            <person name="Villasana D."/>
            <person name="Waldron L."/>
            <person name="Wall M."/>
            <person name="Wang Q."/>
            <person name="Warren J."/>
            <person name="Warry G.L."/>
            <person name="Wei X."/>
            <person name="West A."/>
            <person name="Whitehead S.L."/>
            <person name="Whiteley M.N."/>
            <person name="Wilkinson J.E."/>
            <person name="Willey D.L."/>
            <person name="Williams G."/>
            <person name="Williams L."/>
            <person name="Williamson A."/>
            <person name="Williamson H."/>
            <person name="Wilming L."/>
            <person name="Woodmansey R.L."/>
            <person name="Wray P.W."/>
            <person name="Yen J."/>
            <person name="Zhang J."/>
            <person name="Zhou J."/>
            <person name="Zoghbi H."/>
            <person name="Zorilla S."/>
            <person name="Buck D."/>
            <person name="Reinhardt R."/>
            <person name="Poustka A."/>
            <person name="Rosenthal A."/>
            <person name="Lehrach H."/>
            <person name="Meindl A."/>
            <person name="Minx P.J."/>
            <person name="Hillier L.W."/>
            <person name="Willard H.F."/>
            <person name="Wilson R.K."/>
            <person name="Waterston R.H."/>
            <person name="Rice C.M."/>
            <person name="Vaudin M."/>
            <person name="Coulson A."/>
            <person name="Nelson D.L."/>
            <person name="Weinstock G."/>
            <person name="Sulston J.E."/>
            <person name="Durbin R.M."/>
            <person name="Hubbard T."/>
            <person name="Gibbs R.A."/>
            <person name="Beck S."/>
            <person name="Rogers J."/>
            <person name="Bentley D.R."/>
        </authorList>
    </citation>
    <scope>NUCLEOTIDE SEQUENCE [LARGE SCALE GENOMIC DNA]</scope>
</reference>
<reference key="6">
    <citation type="journal article" date="2004" name="Genome Res.">
        <title>The status, quality, and expansion of the NIH full-length cDNA project: the Mammalian Gene Collection (MGC).</title>
        <authorList>
            <consortium name="The MGC Project Team"/>
        </authorList>
    </citation>
    <scope>NUCLEOTIDE SEQUENCE [LARGE SCALE MRNA] (ISOFORMS 1 AND 5)</scope>
    <source>
        <tissue>Lung</tissue>
    </source>
</reference>
<reference key="7">
    <citation type="journal article" date="2007" name="BMC Genomics">
        <title>The full-ORF clone resource of the German cDNA consortium.</title>
        <authorList>
            <person name="Bechtel S."/>
            <person name="Rosenfelder H."/>
            <person name="Duda A."/>
            <person name="Schmidt C.P."/>
            <person name="Ernst U."/>
            <person name="Wellenreuther R."/>
            <person name="Mehrle A."/>
            <person name="Schuster C."/>
            <person name="Bahr A."/>
            <person name="Bloecker H."/>
            <person name="Heubner D."/>
            <person name="Hoerlein A."/>
            <person name="Michel G."/>
            <person name="Wedler H."/>
            <person name="Koehrer K."/>
            <person name="Ottenwaelder B."/>
            <person name="Poustka A."/>
            <person name="Wiemann S."/>
            <person name="Schupp I."/>
        </authorList>
    </citation>
    <scope>NUCLEOTIDE SEQUENCE [LARGE SCALE MRNA] OF 60-354</scope>
    <source>
        <tissue>Testis</tissue>
    </source>
</reference>
<reference key="8">
    <citation type="journal article" date="2002" name="Hum. Mol. Genet.">
        <title>Three proteins, MBNL, MBLL and MBXL, co-localize in vivo with nuclear foci of expanded-repeat transcripts in DM1 and DM2 cells.</title>
        <authorList>
            <person name="Fardaei M."/>
            <person name="Rogers M.T."/>
            <person name="Thorpe H.M."/>
            <person name="Larkin K."/>
            <person name="Hamshere M.G."/>
            <person name="Harper P.S."/>
            <person name="Brook J.D."/>
        </authorList>
    </citation>
    <scope>SUBCELLULAR LOCATION</scope>
    <scope>TISSUE SPECIFICITY</scope>
    <scope>ALTERNATIVE SPLICING</scope>
</reference>
<reference key="9">
    <citation type="journal article" date="2004" name="EMBO J.">
        <title>Muscleblind proteins regulate alternative splicing.</title>
        <authorList>
            <person name="Ho T.H."/>
            <person name="Charlet-B N."/>
            <person name="Poulos M.G."/>
            <person name="Singh G."/>
            <person name="Swanson M.S."/>
            <person name="Cooper T.A."/>
        </authorList>
    </citation>
    <scope>FUNCTION</scope>
</reference>
<protein>
    <recommendedName>
        <fullName>Muscleblind-like protein 3</fullName>
    </recommendedName>
    <alternativeName>
        <fullName>Cys3His CCG1-required protein</fullName>
    </alternativeName>
    <alternativeName>
        <fullName>Muscleblind-like X-linked protein</fullName>
    </alternativeName>
    <alternativeName>
        <fullName>Protein HCHCR</fullName>
    </alternativeName>
</protein>
<keyword id="KW-0025">Alternative splicing</keyword>
<keyword id="KW-0963">Cytoplasm</keyword>
<keyword id="KW-0217">Developmental protein</keyword>
<keyword id="KW-0479">Metal-binding</keyword>
<keyword id="KW-0507">mRNA processing</keyword>
<keyword id="KW-0508">mRNA splicing</keyword>
<keyword id="KW-0539">Nucleus</keyword>
<keyword id="KW-1267">Proteomics identification</keyword>
<keyword id="KW-1185">Reference proteome</keyword>
<keyword id="KW-0677">Repeat</keyword>
<keyword id="KW-0862">Zinc</keyword>
<keyword id="KW-0863">Zinc-finger</keyword>
<sequence length="354" mass="38532">MTAVNVALIRDTKWLTLEVCREFQRGTCSRADADCKFAHPPRVCHVENGRVVACFDSLKGRCTRENCKYLHPPPHLKTQLEINGRNNLIQQKTAAAMFAQQMQLMLQNAQMSSLGSFPMTPSIPANPPMAFNPYIPHPGMGLVPAELVPNTPVLIPGNPPLAMPGAVGPKLMRSDKLEVCREFQRGNCTRGENDCRYAHPTDASMIEASDNTVTICMDYIKGRCSREKCKYFHPPAHLQARLKAAHHQMNHSAASAMALQPGTLQLIPKRSALEKPNGATPVFNPTVFHCQQALTNLQLPQPAFIPAGPILCMAPASNIVPMMHGATPTTVSAATTPATSVPFAAPTTGNQLKF</sequence>
<dbReference type="EMBL" id="AY072692">
    <property type="protein sequence ID" value="AAL65661.1"/>
    <property type="molecule type" value="mRNA"/>
</dbReference>
<dbReference type="EMBL" id="AF467070">
    <property type="protein sequence ID" value="AAL87670.1"/>
    <property type="molecule type" value="mRNA"/>
</dbReference>
<dbReference type="EMBL" id="AB077698">
    <property type="protein sequence ID" value="BAB85648.1"/>
    <property type="molecule type" value="mRNA"/>
</dbReference>
<dbReference type="EMBL" id="AB077699">
    <property type="protein sequence ID" value="BAB85649.1"/>
    <property type="molecule type" value="mRNA"/>
</dbReference>
<dbReference type="EMBL" id="AJ427918">
    <property type="protein sequence ID" value="CAD20869.1"/>
    <property type="molecule type" value="mRNA"/>
</dbReference>
<dbReference type="EMBL" id="AJ427919">
    <property type="protein sequence ID" value="CAD20870.1"/>
    <property type="molecule type" value="mRNA"/>
</dbReference>
<dbReference type="EMBL" id="AF491305">
    <property type="protein sequence ID" value="AAM09533.1"/>
    <property type="molecule type" value="mRNA"/>
</dbReference>
<dbReference type="EMBL" id="AY372211">
    <property type="protein sequence ID" value="AAQ75759.1"/>
    <property type="molecule type" value="mRNA"/>
</dbReference>
<dbReference type="EMBL" id="AK002178">
    <property type="protein sequence ID" value="BAA92124.1"/>
    <property type="molecule type" value="mRNA"/>
</dbReference>
<dbReference type="EMBL" id="AK300248">
    <property type="protein sequence ID" value="BAG62014.1"/>
    <property type="molecule type" value="mRNA"/>
</dbReference>
<dbReference type="EMBL" id="AL161442">
    <property type="status" value="NOT_ANNOTATED_CDS"/>
    <property type="molecule type" value="Genomic_DNA"/>
</dbReference>
<dbReference type="EMBL" id="AL050310">
    <property type="status" value="NOT_ANNOTATED_CDS"/>
    <property type="molecule type" value="Genomic_DNA"/>
</dbReference>
<dbReference type="EMBL" id="BC042090">
    <property type="protein sequence ID" value="AAH42090.1"/>
    <property type="molecule type" value="mRNA"/>
</dbReference>
<dbReference type="EMBL" id="BC074775">
    <property type="protein sequence ID" value="AAH74775.1"/>
    <property type="molecule type" value="mRNA"/>
</dbReference>
<dbReference type="EMBL" id="BC074776">
    <property type="protein sequence ID" value="AAH74776.1"/>
    <property type="molecule type" value="mRNA"/>
</dbReference>
<dbReference type="EMBL" id="AL133625">
    <property type="protein sequence ID" value="CAB63751.1"/>
    <property type="molecule type" value="mRNA"/>
</dbReference>
<dbReference type="CCDS" id="CCDS14633.1">
    <molecule id="Q9NUK0-1"/>
</dbReference>
<dbReference type="CCDS" id="CCDS14634.1">
    <molecule id="Q9NUK0-2"/>
</dbReference>
<dbReference type="CCDS" id="CCDS55492.1">
    <molecule id="Q9NUK0-5"/>
</dbReference>
<dbReference type="PIR" id="T43463">
    <property type="entry name" value="T43463"/>
</dbReference>
<dbReference type="RefSeq" id="NP_001164172.2">
    <molecule id="Q9NUK0-5"/>
    <property type="nucleotide sequence ID" value="NM_001170701.3"/>
</dbReference>
<dbReference type="RefSeq" id="NP_001164173.1">
    <property type="nucleotide sequence ID" value="NM_001170702.1"/>
</dbReference>
<dbReference type="RefSeq" id="NP_001164174.1">
    <molecule id="Q9NUK0-5"/>
    <property type="nucleotide sequence ID" value="NM_001170703.2"/>
</dbReference>
<dbReference type="RefSeq" id="NP_001164175.1">
    <molecule id="Q9NUK0-5"/>
    <property type="nucleotide sequence ID" value="NM_001170704.2"/>
</dbReference>
<dbReference type="RefSeq" id="NP_001373818.1">
    <molecule id="Q9NUK0-1"/>
    <property type="nucleotide sequence ID" value="NM_001386889.1"/>
</dbReference>
<dbReference type="RefSeq" id="NP_001373823.1">
    <molecule id="Q9NUK0-1"/>
    <property type="nucleotide sequence ID" value="NM_001386894.1"/>
</dbReference>
<dbReference type="RefSeq" id="NP_001373825.1">
    <molecule id="Q9NUK0-1"/>
    <property type="nucleotide sequence ID" value="NM_001386896.1"/>
</dbReference>
<dbReference type="RefSeq" id="NP_001373826.1">
    <molecule id="Q9NUK0-1"/>
    <property type="nucleotide sequence ID" value="NM_001386897.1"/>
</dbReference>
<dbReference type="RefSeq" id="NP_001373839.1">
    <molecule id="Q9NUK0-5"/>
    <property type="nucleotide sequence ID" value="NM_001386910.1"/>
</dbReference>
<dbReference type="RefSeq" id="NP_001373840.1">
    <molecule id="Q9NUK0-5"/>
    <property type="nucleotide sequence ID" value="NM_001386911.1"/>
</dbReference>
<dbReference type="RefSeq" id="NP_001373841.1">
    <molecule id="Q9NUK0-5"/>
    <property type="nucleotide sequence ID" value="NM_001386912.1"/>
</dbReference>
<dbReference type="RefSeq" id="NP_001373842.1">
    <molecule id="Q9NUK0-5"/>
    <property type="nucleotide sequence ID" value="NM_001386913.1"/>
</dbReference>
<dbReference type="RefSeq" id="NP_060858.2">
    <molecule id="Q9NUK0-1"/>
    <property type="nucleotide sequence ID" value="NM_018388.3"/>
</dbReference>
<dbReference type="RefSeq" id="NP_597846.1">
    <molecule id="Q9NUK0-2"/>
    <property type="nucleotide sequence ID" value="NM_133486.4"/>
</dbReference>
<dbReference type="RefSeq" id="XP_005262491.1">
    <property type="nucleotide sequence ID" value="XM_005262434.3"/>
</dbReference>
<dbReference type="RefSeq" id="XP_016885124.1">
    <property type="nucleotide sequence ID" value="XM_017029635.1"/>
</dbReference>
<dbReference type="RefSeq" id="XP_016885125.1">
    <property type="nucleotide sequence ID" value="XM_017029636.1"/>
</dbReference>
<dbReference type="RefSeq" id="XP_016885128.1">
    <property type="nucleotide sequence ID" value="XM_017029639.1"/>
</dbReference>
<dbReference type="RefSeq" id="XP_054183360.1">
    <molecule id="Q9NUK0-1"/>
    <property type="nucleotide sequence ID" value="XM_054327385.1"/>
</dbReference>
<dbReference type="SMR" id="Q9NUK0"/>
<dbReference type="BioGRID" id="120909">
    <property type="interactions" value="17"/>
</dbReference>
<dbReference type="FunCoup" id="Q9NUK0">
    <property type="interactions" value="2238"/>
</dbReference>
<dbReference type="IntAct" id="Q9NUK0">
    <property type="interactions" value="8"/>
</dbReference>
<dbReference type="STRING" id="9606.ENSP00000359890"/>
<dbReference type="GlyGen" id="Q9NUK0">
    <property type="glycosylation" value="1 site, 1 O-linked glycan (1 site)"/>
</dbReference>
<dbReference type="iPTMnet" id="Q9NUK0"/>
<dbReference type="PhosphoSitePlus" id="Q9NUK0"/>
<dbReference type="BioMuta" id="MBNL3"/>
<dbReference type="DMDM" id="26396510"/>
<dbReference type="jPOST" id="Q9NUK0"/>
<dbReference type="MassIVE" id="Q9NUK0"/>
<dbReference type="PaxDb" id="9606-ENSP00000359890"/>
<dbReference type="PeptideAtlas" id="Q9NUK0"/>
<dbReference type="ProteomicsDB" id="70598"/>
<dbReference type="ProteomicsDB" id="82679">
    <molecule id="Q9NUK0-1"/>
</dbReference>
<dbReference type="ProteomicsDB" id="82680">
    <molecule id="Q9NUK0-2"/>
</dbReference>
<dbReference type="ProteomicsDB" id="82681">
    <molecule id="Q9NUK0-3"/>
</dbReference>
<dbReference type="ProteomicsDB" id="82682">
    <molecule id="Q9NUK0-4"/>
</dbReference>
<dbReference type="Pumba" id="Q9NUK0"/>
<dbReference type="Antibodypedia" id="446">
    <property type="antibodies" value="151 antibodies from 27 providers"/>
</dbReference>
<dbReference type="DNASU" id="55796"/>
<dbReference type="Ensembl" id="ENST00000370839.7">
    <molecule id="Q9NUK0-2"/>
    <property type="protein sequence ID" value="ENSP00000359876.3"/>
    <property type="gene ID" value="ENSG00000076770.16"/>
</dbReference>
<dbReference type="Ensembl" id="ENST00000370844.5">
    <molecule id="Q9NUK0-5"/>
    <property type="protein sequence ID" value="ENSP00000359881.1"/>
    <property type="gene ID" value="ENSG00000076770.16"/>
</dbReference>
<dbReference type="Ensembl" id="ENST00000370849.7">
    <molecule id="Q9NUK0-3"/>
    <property type="protein sequence ID" value="ENSP00000359886.3"/>
    <property type="gene ID" value="ENSG00000076770.16"/>
</dbReference>
<dbReference type="Ensembl" id="ENST00000370853.8">
    <molecule id="Q9NUK0-1"/>
    <property type="protein sequence ID" value="ENSP00000359890.3"/>
    <property type="gene ID" value="ENSG00000076770.16"/>
</dbReference>
<dbReference type="Ensembl" id="ENST00000394311.7">
    <molecule id="Q9NUK0-5"/>
    <property type="protein sequence ID" value="ENSP00000377848.2"/>
    <property type="gene ID" value="ENSG00000076770.16"/>
</dbReference>
<dbReference type="Ensembl" id="ENST00000538204.6">
    <molecule id="Q9NUK0-4"/>
    <property type="protein sequence ID" value="ENSP00000439618.1"/>
    <property type="gene ID" value="ENSG00000076770.16"/>
</dbReference>
<dbReference type="Ensembl" id="ENST00000698664.1">
    <molecule id="Q9NUK0-1"/>
    <property type="protein sequence ID" value="ENSP00000513866.1"/>
    <property type="gene ID" value="ENSG00000076770.16"/>
</dbReference>
<dbReference type="GeneID" id="55796"/>
<dbReference type="KEGG" id="hsa:55796"/>
<dbReference type="MANE-Select" id="ENST00000370853.8">
    <property type="protein sequence ID" value="ENSP00000359890.3"/>
    <property type="RefSeq nucleotide sequence ID" value="NM_001386889.1"/>
    <property type="RefSeq protein sequence ID" value="NP_001373818.1"/>
</dbReference>
<dbReference type="UCSC" id="uc004ewt.4">
    <molecule id="Q9NUK0-1"/>
    <property type="organism name" value="human"/>
</dbReference>
<dbReference type="AGR" id="HGNC:20564"/>
<dbReference type="CTD" id="55796"/>
<dbReference type="DisGeNET" id="55796"/>
<dbReference type="GeneCards" id="MBNL3"/>
<dbReference type="HGNC" id="HGNC:20564">
    <property type="gene designation" value="MBNL3"/>
</dbReference>
<dbReference type="HPA" id="ENSG00000076770">
    <property type="expression patterns" value="Tissue enhanced (liver, placenta)"/>
</dbReference>
<dbReference type="MIM" id="300413">
    <property type="type" value="gene"/>
</dbReference>
<dbReference type="neXtProt" id="NX_Q9NUK0"/>
<dbReference type="OpenTargets" id="ENSG00000076770"/>
<dbReference type="PharmGKB" id="PA134992936"/>
<dbReference type="VEuPathDB" id="HostDB:ENSG00000076770"/>
<dbReference type="eggNOG" id="KOG2494">
    <property type="taxonomic scope" value="Eukaryota"/>
</dbReference>
<dbReference type="GeneTree" id="ENSGT00950000182897"/>
<dbReference type="HOGENOM" id="CLU_053536_0_0_1"/>
<dbReference type="InParanoid" id="Q9NUK0"/>
<dbReference type="OMA" id="IECKYAH"/>
<dbReference type="OrthoDB" id="6285980at2759"/>
<dbReference type="PAN-GO" id="Q9NUK0">
    <property type="GO annotations" value="4 GO annotations based on evolutionary models"/>
</dbReference>
<dbReference type="PhylomeDB" id="Q9NUK0"/>
<dbReference type="TreeFam" id="TF321931"/>
<dbReference type="PathwayCommons" id="Q9NUK0"/>
<dbReference type="SignaLink" id="Q9NUK0"/>
<dbReference type="BioGRID-ORCS" id="55796">
    <property type="hits" value="9 hits in 769 CRISPR screens"/>
</dbReference>
<dbReference type="ChiTaRS" id="MBNL3">
    <property type="organism name" value="human"/>
</dbReference>
<dbReference type="GeneWiki" id="MBNL3"/>
<dbReference type="GenomeRNAi" id="55796"/>
<dbReference type="Pharos" id="Q9NUK0">
    <property type="development level" value="Tbio"/>
</dbReference>
<dbReference type="PRO" id="PR:Q9NUK0"/>
<dbReference type="Proteomes" id="UP000005640">
    <property type="component" value="Chromosome X"/>
</dbReference>
<dbReference type="RNAct" id="Q9NUK0">
    <property type="molecule type" value="protein"/>
</dbReference>
<dbReference type="Bgee" id="ENSG00000076770">
    <property type="expression patterns" value="Expressed in cauda epididymis and 173 other cell types or tissues"/>
</dbReference>
<dbReference type="ExpressionAtlas" id="Q9NUK0">
    <property type="expression patterns" value="baseline and differential"/>
</dbReference>
<dbReference type="GO" id="GO:0005737">
    <property type="term" value="C:cytoplasm"/>
    <property type="evidence" value="ECO:0000318"/>
    <property type="project" value="GO_Central"/>
</dbReference>
<dbReference type="GO" id="GO:0005829">
    <property type="term" value="C:cytosol"/>
    <property type="evidence" value="ECO:0000314"/>
    <property type="project" value="HPA"/>
</dbReference>
<dbReference type="GO" id="GO:0005654">
    <property type="term" value="C:nucleoplasm"/>
    <property type="evidence" value="ECO:0000314"/>
    <property type="project" value="HPA"/>
</dbReference>
<dbReference type="GO" id="GO:0003723">
    <property type="term" value="F:RNA binding"/>
    <property type="evidence" value="ECO:0007005"/>
    <property type="project" value="UniProtKB"/>
</dbReference>
<dbReference type="GO" id="GO:0008270">
    <property type="term" value="F:zinc ion binding"/>
    <property type="evidence" value="ECO:0007669"/>
    <property type="project" value="UniProtKB-KW"/>
</dbReference>
<dbReference type="GO" id="GO:0006397">
    <property type="term" value="P:mRNA processing"/>
    <property type="evidence" value="ECO:0007669"/>
    <property type="project" value="UniProtKB-KW"/>
</dbReference>
<dbReference type="GO" id="GO:0045662">
    <property type="term" value="P:negative regulation of myoblast differentiation"/>
    <property type="evidence" value="ECO:0007669"/>
    <property type="project" value="Ensembl"/>
</dbReference>
<dbReference type="GO" id="GO:0043484">
    <property type="term" value="P:regulation of RNA splicing"/>
    <property type="evidence" value="ECO:0000314"/>
    <property type="project" value="UniProtKB"/>
</dbReference>
<dbReference type="GO" id="GO:0008380">
    <property type="term" value="P:RNA splicing"/>
    <property type="evidence" value="ECO:0007669"/>
    <property type="project" value="UniProtKB-KW"/>
</dbReference>
<dbReference type="FunFam" id="3.30.1370.210:FF:000004">
    <property type="entry name" value="Muscleblind like splicing regulator 1"/>
    <property type="match status" value="1"/>
</dbReference>
<dbReference type="FunFam" id="3.30.1370.210:FF:000002">
    <property type="entry name" value="Muscleblind-like 1 isoform 2"/>
    <property type="match status" value="1"/>
</dbReference>
<dbReference type="Gene3D" id="3.30.1370.210">
    <property type="match status" value="2"/>
</dbReference>
<dbReference type="InterPro" id="IPR041367">
    <property type="entry name" value="Znf-CCCH_4"/>
</dbReference>
<dbReference type="InterPro" id="IPR054429">
    <property type="entry name" value="Znf-CCCH_Muscleblind-like"/>
</dbReference>
<dbReference type="InterPro" id="IPR000571">
    <property type="entry name" value="Znf_CCCH"/>
</dbReference>
<dbReference type="PANTHER" id="PTHR12675">
    <property type="entry name" value="MUSCLEBLIND-LIKE PROTEIN"/>
    <property type="match status" value="1"/>
</dbReference>
<dbReference type="PANTHER" id="PTHR12675:SF3">
    <property type="entry name" value="MUSCLEBLIND-LIKE PROTEIN 3"/>
    <property type="match status" value="1"/>
</dbReference>
<dbReference type="Pfam" id="PF22628">
    <property type="entry name" value="zf-CCCH_10"/>
    <property type="match status" value="2"/>
</dbReference>
<dbReference type="Pfam" id="PF14608">
    <property type="entry name" value="zf-CCCH_2"/>
    <property type="match status" value="1"/>
</dbReference>
<dbReference type="Pfam" id="PF18044">
    <property type="entry name" value="zf-CCCH_4"/>
    <property type="match status" value="1"/>
</dbReference>
<dbReference type="SMART" id="SM00356">
    <property type="entry name" value="ZnF_C3H1"/>
    <property type="match status" value="4"/>
</dbReference>
<dbReference type="PROSITE" id="PS50103">
    <property type="entry name" value="ZF_C3H1"/>
    <property type="match status" value="4"/>
</dbReference>
<organism>
    <name type="scientific">Homo sapiens</name>
    <name type="common">Human</name>
    <dbReference type="NCBI Taxonomy" id="9606"/>
    <lineage>
        <taxon>Eukaryota</taxon>
        <taxon>Metazoa</taxon>
        <taxon>Chordata</taxon>
        <taxon>Craniata</taxon>
        <taxon>Vertebrata</taxon>
        <taxon>Euteleostomi</taxon>
        <taxon>Mammalia</taxon>
        <taxon>Eutheria</taxon>
        <taxon>Euarchontoglires</taxon>
        <taxon>Primates</taxon>
        <taxon>Haplorrhini</taxon>
        <taxon>Catarrhini</taxon>
        <taxon>Hominidae</taxon>
        <taxon>Homo</taxon>
    </lineage>
</organism>
<accession>Q9NUK0</accession>
<accession>Q5JXN8</accession>
<accession>Q5JXN9</accession>
<accession>Q5JXP4</accession>
<accession>Q6UDQ1</accession>
<accession>Q8IUR4</accession>
<accession>Q8TAD9</accession>
<accession>Q8TAF4</accession>
<accession>Q9H0Z7</accession>
<accession>Q9UF37</accession>